<name>Y1313_STRP4</name>
<protein>
    <recommendedName>
        <fullName evidence="1">UPF0342 protein SPG_1313</fullName>
    </recommendedName>
</protein>
<comment type="similarity">
    <text evidence="1">Belongs to the UPF0342 family.</text>
</comment>
<gene>
    <name type="ordered locus">SPG_1313</name>
</gene>
<dbReference type="EMBL" id="CP001015">
    <property type="protein sequence ID" value="ACF56187.1"/>
    <property type="molecule type" value="Genomic_DNA"/>
</dbReference>
<dbReference type="SMR" id="B5E5N0"/>
<dbReference type="KEGG" id="spx:SPG_1313"/>
<dbReference type="HOGENOM" id="CLU_140243_2_0_9"/>
<dbReference type="Gene3D" id="1.20.1500.10">
    <property type="entry name" value="YheA/YmcA-like"/>
    <property type="match status" value="1"/>
</dbReference>
<dbReference type="HAMAP" id="MF_01526">
    <property type="entry name" value="UPF0342"/>
    <property type="match status" value="1"/>
</dbReference>
<dbReference type="InterPro" id="IPR010368">
    <property type="entry name" value="Com_YlbF"/>
</dbReference>
<dbReference type="InterPro" id="IPR023378">
    <property type="entry name" value="YheA/YmcA-like_dom_sf"/>
</dbReference>
<dbReference type="NCBIfam" id="NF010209">
    <property type="entry name" value="PRK13676.1-1"/>
    <property type="match status" value="1"/>
</dbReference>
<dbReference type="Pfam" id="PF06133">
    <property type="entry name" value="Com_YlbF"/>
    <property type="match status" value="1"/>
</dbReference>
<dbReference type="SUPFAM" id="SSF158622">
    <property type="entry name" value="YheA/YmcA-like"/>
    <property type="match status" value="1"/>
</dbReference>
<accession>B5E5N0</accession>
<sequence length="112" mass="12471">MSNIYDSANELSRGLRGLPEYKAVKAAKDAIAADAEASKIFTEYLAFQEEIQKLAQTGQMPDASFQAKMEGFGKQIQGNSLLSEFFTKQQQLAIYLSDIEKIVFEPVSELLK</sequence>
<feature type="chain" id="PRO_1000198531" description="UPF0342 protein SPG_1313">
    <location>
        <begin position="1"/>
        <end position="112"/>
    </location>
</feature>
<organism>
    <name type="scientific">Streptococcus pneumoniae serotype 19F (strain G54)</name>
    <dbReference type="NCBI Taxonomy" id="512566"/>
    <lineage>
        <taxon>Bacteria</taxon>
        <taxon>Bacillati</taxon>
        <taxon>Bacillota</taxon>
        <taxon>Bacilli</taxon>
        <taxon>Lactobacillales</taxon>
        <taxon>Streptococcaceae</taxon>
        <taxon>Streptococcus</taxon>
    </lineage>
</organism>
<reference key="1">
    <citation type="journal article" date="2001" name="Microb. Drug Resist.">
        <title>Annotated draft genomic sequence from a Streptococcus pneumoniae type 19F clinical isolate.</title>
        <authorList>
            <person name="Dopazo J."/>
            <person name="Mendoza A."/>
            <person name="Herrero J."/>
            <person name="Caldara F."/>
            <person name="Humbert Y."/>
            <person name="Friedli L."/>
            <person name="Guerrier M."/>
            <person name="Grand-Schenk E."/>
            <person name="Gandin C."/>
            <person name="de Francesco M."/>
            <person name="Polissi A."/>
            <person name="Buell G."/>
            <person name="Feger G."/>
            <person name="Garcia E."/>
            <person name="Peitsch M."/>
            <person name="Garcia-Bustos J.F."/>
        </authorList>
    </citation>
    <scope>NUCLEOTIDE SEQUENCE [LARGE SCALE GENOMIC DNA]</scope>
    <source>
        <strain>G54</strain>
    </source>
</reference>
<reference key="2">
    <citation type="submission" date="2008-03" db="EMBL/GenBank/DDBJ databases">
        <title>Pneumococcal beta glucoside metabolism investigated by whole genome comparison.</title>
        <authorList>
            <person name="Mulas L."/>
            <person name="Trappetti C."/>
            <person name="Hakenbeck R."/>
            <person name="Iannelli F."/>
            <person name="Pozzi G."/>
            <person name="Davidsen T.M."/>
            <person name="Tettelin H."/>
            <person name="Oggioni M."/>
        </authorList>
    </citation>
    <scope>NUCLEOTIDE SEQUENCE [LARGE SCALE GENOMIC DNA]</scope>
    <source>
        <strain>G54</strain>
    </source>
</reference>
<proteinExistence type="inferred from homology"/>
<evidence type="ECO:0000255" key="1">
    <source>
        <dbReference type="HAMAP-Rule" id="MF_01526"/>
    </source>
</evidence>